<dbReference type="EC" id="4.2.3.21"/>
<dbReference type="EMBL" id="U20189">
    <property type="protein sequence ID" value="AAA86338.1"/>
    <property type="molecule type" value="mRNA"/>
</dbReference>
<dbReference type="PIR" id="B56118">
    <property type="entry name" value="B56118"/>
</dbReference>
<dbReference type="SMR" id="Q39979"/>
<dbReference type="KEGG" id="ag:AAA86338"/>
<dbReference type="UniPathway" id="UPA00213"/>
<dbReference type="GO" id="GO:0005737">
    <property type="term" value="C:cytoplasm"/>
    <property type="evidence" value="ECO:0007669"/>
    <property type="project" value="UniProtKB-SubCell"/>
</dbReference>
<dbReference type="GO" id="GO:0000287">
    <property type="term" value="F:magnesium ion binding"/>
    <property type="evidence" value="ECO:0007669"/>
    <property type="project" value="InterPro"/>
</dbReference>
<dbReference type="GO" id="GO:0034003">
    <property type="term" value="F:vetispiradiene synthase activity"/>
    <property type="evidence" value="ECO:0007669"/>
    <property type="project" value="UniProtKB-EC"/>
</dbReference>
<dbReference type="GO" id="GO:0016114">
    <property type="term" value="P:terpenoid biosynthetic process"/>
    <property type="evidence" value="ECO:0007669"/>
    <property type="project" value="UniProtKB-UniPathway"/>
</dbReference>
<dbReference type="FunFam" id="1.10.600.10:FF:000007">
    <property type="entry name" value="Isoprene synthase, chloroplastic"/>
    <property type="match status" value="1"/>
</dbReference>
<dbReference type="Gene3D" id="1.10.600.10">
    <property type="entry name" value="Farnesyl Diphosphate Synthase"/>
    <property type="match status" value="1"/>
</dbReference>
<dbReference type="InterPro" id="IPR008949">
    <property type="entry name" value="Isoprenoid_synthase_dom_sf"/>
</dbReference>
<dbReference type="InterPro" id="IPR034741">
    <property type="entry name" value="Terpene_cyclase-like_1_C"/>
</dbReference>
<dbReference type="InterPro" id="IPR050148">
    <property type="entry name" value="Terpene_synthase-like"/>
</dbReference>
<dbReference type="InterPro" id="IPR005630">
    <property type="entry name" value="Terpene_synthase_metal-bd"/>
</dbReference>
<dbReference type="PANTHER" id="PTHR31225">
    <property type="entry name" value="OS04G0344100 PROTEIN-RELATED"/>
    <property type="match status" value="1"/>
</dbReference>
<dbReference type="PANTHER" id="PTHR31225:SF253">
    <property type="entry name" value="SESQUITERPENE SYNTHASE 31"/>
    <property type="match status" value="1"/>
</dbReference>
<dbReference type="Pfam" id="PF03936">
    <property type="entry name" value="Terpene_synth_C"/>
    <property type="match status" value="1"/>
</dbReference>
<dbReference type="SFLD" id="SFLDS00005">
    <property type="entry name" value="Isoprenoid_Synthase_Type_I"/>
    <property type="match status" value="1"/>
</dbReference>
<dbReference type="SFLD" id="SFLDG01019">
    <property type="entry name" value="Terpene_Cyclase_Like_1_C_Termi"/>
    <property type="match status" value="1"/>
</dbReference>
<dbReference type="SUPFAM" id="SSF48576">
    <property type="entry name" value="Terpenoid synthases"/>
    <property type="match status" value="1"/>
</dbReference>
<reference key="1">
    <citation type="journal article" date="1995" name="J. Biol. Chem.">
        <title>Cloning and bacterial expression of a sesquiterpene cyclase from Hyoscyamus muticus and its molecular comparison to related terpene cyclases.</title>
        <authorList>
            <person name="Back K."/>
            <person name="Chappell J."/>
        </authorList>
    </citation>
    <scope>NUCLEOTIDE SEQUENCE [MRNA]</scope>
    <scope>CATALYTIC ACTIVITY</scope>
    <scope>INDUCTION BY ELICITOR</scope>
</reference>
<name>VTSS2_HYOMU</name>
<evidence type="ECO:0000250" key="1"/>
<evidence type="ECO:0000269" key="2">
    <source>
    </source>
</evidence>
<evidence type="ECO:0000305" key="3"/>
<protein>
    <recommendedName>
        <fullName>Vetispiradiene synthase 2</fullName>
        <shortName>HVS2</shortName>
        <ecNumber>4.2.3.21</ecNumber>
    </recommendedName>
</protein>
<comment type="function">
    <text>Sesquiterpene synthase that catalyzes the formation of vetispiradiene from trans,trans-farnesyl diphosphate. The initial internal cyclization produces the monocyclic intermediate germacrene A.</text>
</comment>
<comment type="catalytic activity">
    <reaction evidence="2">
        <text>(2E,6E)-farnesyl diphosphate = (-)-vetispiradiene + diphosphate</text>
        <dbReference type="Rhea" id="RHEA:10340"/>
        <dbReference type="ChEBI" id="CHEBI:33019"/>
        <dbReference type="ChEBI" id="CHEBI:46971"/>
        <dbReference type="ChEBI" id="CHEBI:175763"/>
        <dbReference type="EC" id="4.2.3.21"/>
    </reaction>
</comment>
<comment type="cofactor">
    <cofactor evidence="1">
        <name>Mg(2+)</name>
        <dbReference type="ChEBI" id="CHEBI:18420"/>
    </cofactor>
    <text evidence="1">Binds 3 Mg(2+) ions per subunit.</text>
</comment>
<comment type="pathway">
    <text>Secondary metabolite biosynthesis; terpenoid biosynthesis.</text>
</comment>
<comment type="subcellular location">
    <subcellularLocation>
        <location evidence="3">Cytoplasm</location>
    </subcellularLocation>
</comment>
<comment type="induction">
    <text evidence="2">By elicitor from R.solani.</text>
</comment>
<comment type="domain">
    <text>The Asp-Asp-Xaa-Xaa-Asp/Glu (DDXXD/E) motif is important for the catalytic activity, presumably through binding to Mg(2+).</text>
</comment>
<comment type="similarity">
    <text evidence="3">Belongs to the terpene synthase family. Tpsa subfamily.</text>
</comment>
<sequence length="300" mass="34959">SRWWKDLDFVTTLPYARDRAVECYFWTMGVYAEPQYSQARVMLAKTIAMISIVDDTFDAYGIVKEFEVYTDAIQRWDISQIDRLPEYMKISYKALLDLYDDYEKELSKDGRSDVVHYAKERMKEIVRNYFIEAKWFIEGYMPSVSEYLSNALATSTYYLLTTTSYLGMKSATKEHFEWLATNPKILEANATLCRVVDDIATYEVEKGRGQIATGIECYMRDYGVSTEVAMEKFQEMAEIAWKDVNEEILRPTPVSAEILTRILNLARIIDVTYKHNQDGYTHPEKFKPHIIALLVDSIEI</sequence>
<keyword id="KW-0963">Cytoplasm</keyword>
<keyword id="KW-0456">Lyase</keyword>
<keyword id="KW-0460">Magnesium</keyword>
<keyword id="KW-0479">Metal-binding</keyword>
<proteinExistence type="evidence at protein level"/>
<organism>
    <name type="scientific">Hyoscyamus muticus</name>
    <name type="common">Egyptian henbane</name>
    <dbReference type="NCBI Taxonomy" id="35626"/>
    <lineage>
        <taxon>Eukaryota</taxon>
        <taxon>Viridiplantae</taxon>
        <taxon>Streptophyta</taxon>
        <taxon>Embryophyta</taxon>
        <taxon>Tracheophyta</taxon>
        <taxon>Spermatophyta</taxon>
        <taxon>Magnoliopsida</taxon>
        <taxon>eudicotyledons</taxon>
        <taxon>Gunneridae</taxon>
        <taxon>Pentapetalae</taxon>
        <taxon>asterids</taxon>
        <taxon>lamiids</taxon>
        <taxon>Solanales</taxon>
        <taxon>Solanaceae</taxon>
        <taxon>Solanoideae</taxon>
        <taxon>Hyoscyameae</taxon>
        <taxon>Hyoscyamus</taxon>
    </lineage>
</organism>
<feature type="chain" id="PRO_0000398185" description="Vetispiradiene synthase 2">
    <location>
        <begin position="1" status="less than"/>
        <end position="300"/>
    </location>
</feature>
<feature type="short sequence motif" description="DDXXD motif">
    <location>
        <begin position="54"/>
        <end position="58"/>
    </location>
</feature>
<feature type="binding site" evidence="1">
    <location>
        <position position="54"/>
    </location>
    <ligand>
        <name>Mg(2+)</name>
        <dbReference type="ChEBI" id="CHEBI:18420"/>
        <label>1</label>
    </ligand>
</feature>
<feature type="binding site" evidence="1">
    <location>
        <position position="54"/>
    </location>
    <ligand>
        <name>Mg(2+)</name>
        <dbReference type="ChEBI" id="CHEBI:18420"/>
        <label>2</label>
    </ligand>
</feature>
<feature type="binding site" evidence="1">
    <location>
        <position position="58"/>
    </location>
    <ligand>
        <name>Mg(2+)</name>
        <dbReference type="ChEBI" id="CHEBI:18420"/>
        <label>1</label>
    </ligand>
</feature>
<feature type="binding site" evidence="1">
    <location>
        <position position="58"/>
    </location>
    <ligand>
        <name>Mg(2+)</name>
        <dbReference type="ChEBI" id="CHEBI:18420"/>
        <label>2</label>
    </ligand>
</feature>
<feature type="binding site" evidence="1">
    <location>
        <position position="197"/>
    </location>
    <ligand>
        <name>Mg(2+)</name>
        <dbReference type="ChEBI" id="CHEBI:18420"/>
        <label>3</label>
    </ligand>
</feature>
<feature type="binding site" evidence="1">
    <location>
        <position position="201"/>
    </location>
    <ligand>
        <name>Mg(2+)</name>
        <dbReference type="ChEBI" id="CHEBI:18420"/>
        <label>3</label>
    </ligand>
</feature>
<feature type="binding site" evidence="1">
    <location>
        <position position="205"/>
    </location>
    <ligand>
        <name>Mg(2+)</name>
        <dbReference type="ChEBI" id="CHEBI:18420"/>
        <label>3</label>
    </ligand>
</feature>
<feature type="non-terminal residue">
    <location>
        <position position="1"/>
    </location>
</feature>
<accession>Q39979</accession>